<name>KTHY_LACLS</name>
<organism>
    <name type="scientific">Lactococcus lactis subsp. cremoris (strain SK11)</name>
    <dbReference type="NCBI Taxonomy" id="272622"/>
    <lineage>
        <taxon>Bacteria</taxon>
        <taxon>Bacillati</taxon>
        <taxon>Bacillota</taxon>
        <taxon>Bacilli</taxon>
        <taxon>Lactobacillales</taxon>
        <taxon>Streptococcaceae</taxon>
        <taxon>Lactococcus</taxon>
        <taxon>Lactococcus cremoris subsp. cremoris</taxon>
    </lineage>
</organism>
<protein>
    <recommendedName>
        <fullName evidence="1">Thymidylate kinase</fullName>
        <ecNumber evidence="1">2.7.4.9</ecNumber>
    </recommendedName>
    <alternativeName>
        <fullName evidence="1">dTMP kinase</fullName>
    </alternativeName>
</protein>
<comment type="function">
    <text evidence="1">Phosphorylation of dTMP to form dTDP in both de novo and salvage pathways of dTTP synthesis.</text>
</comment>
<comment type="catalytic activity">
    <reaction evidence="1">
        <text>dTMP + ATP = dTDP + ADP</text>
        <dbReference type="Rhea" id="RHEA:13517"/>
        <dbReference type="ChEBI" id="CHEBI:30616"/>
        <dbReference type="ChEBI" id="CHEBI:58369"/>
        <dbReference type="ChEBI" id="CHEBI:63528"/>
        <dbReference type="ChEBI" id="CHEBI:456216"/>
        <dbReference type="EC" id="2.7.4.9"/>
    </reaction>
</comment>
<comment type="similarity">
    <text evidence="1">Belongs to the thymidylate kinase family.</text>
</comment>
<gene>
    <name evidence="1" type="primary">tmk</name>
    <name type="ordered locus">LACR_0445</name>
</gene>
<reference key="1">
    <citation type="journal article" date="2006" name="Proc. Natl. Acad. Sci. U.S.A.">
        <title>Comparative genomics of the lactic acid bacteria.</title>
        <authorList>
            <person name="Makarova K.S."/>
            <person name="Slesarev A."/>
            <person name="Wolf Y.I."/>
            <person name="Sorokin A."/>
            <person name="Mirkin B."/>
            <person name="Koonin E.V."/>
            <person name="Pavlov A."/>
            <person name="Pavlova N."/>
            <person name="Karamychev V."/>
            <person name="Polouchine N."/>
            <person name="Shakhova V."/>
            <person name="Grigoriev I."/>
            <person name="Lou Y."/>
            <person name="Rohksar D."/>
            <person name="Lucas S."/>
            <person name="Huang K."/>
            <person name="Goodstein D.M."/>
            <person name="Hawkins T."/>
            <person name="Plengvidhya V."/>
            <person name="Welker D."/>
            <person name="Hughes J."/>
            <person name="Goh Y."/>
            <person name="Benson A."/>
            <person name="Baldwin K."/>
            <person name="Lee J.-H."/>
            <person name="Diaz-Muniz I."/>
            <person name="Dosti B."/>
            <person name="Smeianov V."/>
            <person name="Wechter W."/>
            <person name="Barabote R."/>
            <person name="Lorca G."/>
            <person name="Altermann E."/>
            <person name="Barrangou R."/>
            <person name="Ganesan B."/>
            <person name="Xie Y."/>
            <person name="Rawsthorne H."/>
            <person name="Tamir D."/>
            <person name="Parker C."/>
            <person name="Breidt F."/>
            <person name="Broadbent J.R."/>
            <person name="Hutkins R."/>
            <person name="O'Sullivan D."/>
            <person name="Steele J."/>
            <person name="Unlu G."/>
            <person name="Saier M.H. Jr."/>
            <person name="Klaenhammer T."/>
            <person name="Richardson P."/>
            <person name="Kozyavkin S."/>
            <person name="Weimer B.C."/>
            <person name="Mills D.A."/>
        </authorList>
    </citation>
    <scope>NUCLEOTIDE SEQUENCE [LARGE SCALE GENOMIC DNA]</scope>
    <source>
        <strain>SK11</strain>
    </source>
</reference>
<evidence type="ECO:0000255" key="1">
    <source>
        <dbReference type="HAMAP-Rule" id="MF_00165"/>
    </source>
</evidence>
<feature type="chain" id="PRO_1000023211" description="Thymidylate kinase">
    <location>
        <begin position="1"/>
        <end position="211"/>
    </location>
</feature>
<feature type="binding site" evidence="1">
    <location>
        <begin position="10"/>
        <end position="17"/>
    </location>
    <ligand>
        <name>ATP</name>
        <dbReference type="ChEBI" id="CHEBI:30616"/>
    </ligand>
</feature>
<accession>Q031S3</accession>
<dbReference type="EC" id="2.7.4.9" evidence="1"/>
<dbReference type="EMBL" id="CP000425">
    <property type="protein sequence ID" value="ABJ72049.1"/>
    <property type="molecule type" value="Genomic_DNA"/>
</dbReference>
<dbReference type="RefSeq" id="WP_011675469.1">
    <property type="nucleotide sequence ID" value="NC_008527.1"/>
</dbReference>
<dbReference type="SMR" id="Q031S3"/>
<dbReference type="KEGG" id="llc:LACR_0445"/>
<dbReference type="HOGENOM" id="CLU_049131_0_2_9"/>
<dbReference type="Proteomes" id="UP000000240">
    <property type="component" value="Chromosome"/>
</dbReference>
<dbReference type="GO" id="GO:0005829">
    <property type="term" value="C:cytosol"/>
    <property type="evidence" value="ECO:0007669"/>
    <property type="project" value="TreeGrafter"/>
</dbReference>
<dbReference type="GO" id="GO:0005524">
    <property type="term" value="F:ATP binding"/>
    <property type="evidence" value="ECO:0007669"/>
    <property type="project" value="UniProtKB-UniRule"/>
</dbReference>
<dbReference type="GO" id="GO:0004798">
    <property type="term" value="F:dTMP kinase activity"/>
    <property type="evidence" value="ECO:0007669"/>
    <property type="project" value="UniProtKB-UniRule"/>
</dbReference>
<dbReference type="GO" id="GO:0006233">
    <property type="term" value="P:dTDP biosynthetic process"/>
    <property type="evidence" value="ECO:0007669"/>
    <property type="project" value="InterPro"/>
</dbReference>
<dbReference type="GO" id="GO:0006235">
    <property type="term" value="P:dTTP biosynthetic process"/>
    <property type="evidence" value="ECO:0007669"/>
    <property type="project" value="UniProtKB-UniRule"/>
</dbReference>
<dbReference type="GO" id="GO:0006227">
    <property type="term" value="P:dUDP biosynthetic process"/>
    <property type="evidence" value="ECO:0007669"/>
    <property type="project" value="TreeGrafter"/>
</dbReference>
<dbReference type="CDD" id="cd01672">
    <property type="entry name" value="TMPK"/>
    <property type="match status" value="1"/>
</dbReference>
<dbReference type="FunFam" id="3.40.50.300:FF:000225">
    <property type="entry name" value="Thymidylate kinase"/>
    <property type="match status" value="1"/>
</dbReference>
<dbReference type="Gene3D" id="3.40.50.300">
    <property type="entry name" value="P-loop containing nucleotide triphosphate hydrolases"/>
    <property type="match status" value="1"/>
</dbReference>
<dbReference type="HAMAP" id="MF_00165">
    <property type="entry name" value="Thymidylate_kinase"/>
    <property type="match status" value="1"/>
</dbReference>
<dbReference type="InterPro" id="IPR027417">
    <property type="entry name" value="P-loop_NTPase"/>
</dbReference>
<dbReference type="InterPro" id="IPR039430">
    <property type="entry name" value="Thymidylate_kin-like_dom"/>
</dbReference>
<dbReference type="InterPro" id="IPR018095">
    <property type="entry name" value="Thymidylate_kin_CS"/>
</dbReference>
<dbReference type="InterPro" id="IPR018094">
    <property type="entry name" value="Thymidylate_kinase"/>
</dbReference>
<dbReference type="NCBIfam" id="TIGR00041">
    <property type="entry name" value="DTMP_kinase"/>
    <property type="match status" value="1"/>
</dbReference>
<dbReference type="PANTHER" id="PTHR10344">
    <property type="entry name" value="THYMIDYLATE KINASE"/>
    <property type="match status" value="1"/>
</dbReference>
<dbReference type="PANTHER" id="PTHR10344:SF4">
    <property type="entry name" value="UMP-CMP KINASE 2, MITOCHONDRIAL"/>
    <property type="match status" value="1"/>
</dbReference>
<dbReference type="Pfam" id="PF02223">
    <property type="entry name" value="Thymidylate_kin"/>
    <property type="match status" value="1"/>
</dbReference>
<dbReference type="SUPFAM" id="SSF52540">
    <property type="entry name" value="P-loop containing nucleoside triphosphate hydrolases"/>
    <property type="match status" value="1"/>
</dbReference>
<dbReference type="PROSITE" id="PS01331">
    <property type="entry name" value="THYMIDYLATE_KINASE"/>
    <property type="match status" value="1"/>
</dbReference>
<keyword id="KW-0067">ATP-binding</keyword>
<keyword id="KW-0418">Kinase</keyword>
<keyword id="KW-0545">Nucleotide biosynthesis</keyword>
<keyword id="KW-0547">Nucleotide-binding</keyword>
<keyword id="KW-0808">Transferase</keyword>
<proteinExistence type="inferred from homology"/>
<sequence length="211" mass="24103">MNGILISLEGPDGAGKTTVLQEILPEIQKMKREVVPTREPGGVRVAEEIRQIILDPKNTEIDSKTELMLFEAARRLHMQEKMLPALRAGKVVIVDRFIDSSVAYQGYGRDLGVEVVDWLNYFATDGLKPDLTLYFDIDTDVALERIMKNRADEVNRLDLERAEMHRKVREGYLEIVAKEPERFVKIDASQSLEKVVADTLEVLKKRFVSEF</sequence>